<gene>
    <name evidence="2" type="primary">nylC'</name>
</gene>
<protein>
    <recommendedName>
        <fullName evidence="2">Putative NylC-analogous protein</fullName>
    </recommendedName>
</protein>
<accession>Q14T92</accession>
<feature type="chain" id="PRO_0000452353" description="Putative NylC-analogous protein">
    <location>
        <begin position="1"/>
        <end position="306"/>
    </location>
</feature>
<name>NYLC2_AGRS5</name>
<dbReference type="EMBL" id="AB264778">
    <property type="protein sequence ID" value="BAE97629.1"/>
    <property type="molecule type" value="Genomic_DNA"/>
</dbReference>
<dbReference type="SMR" id="Q14T92"/>
<dbReference type="GO" id="GO:0004177">
    <property type="term" value="F:aminopeptidase activity"/>
    <property type="evidence" value="ECO:0007669"/>
    <property type="project" value="TreeGrafter"/>
</dbReference>
<dbReference type="CDD" id="cd00123">
    <property type="entry name" value="DmpA_OAT"/>
    <property type="match status" value="1"/>
</dbReference>
<dbReference type="Gene3D" id="3.60.70.12">
    <property type="entry name" value="L-amino peptidase D-ALA esterase/amidase"/>
    <property type="match status" value="1"/>
</dbReference>
<dbReference type="InterPro" id="IPR016117">
    <property type="entry name" value="ArgJ-like_dom_sf"/>
</dbReference>
<dbReference type="InterPro" id="IPR005321">
    <property type="entry name" value="Peptidase_S58_DmpA"/>
</dbReference>
<dbReference type="PANTHER" id="PTHR36512:SF3">
    <property type="entry name" value="BLR5678 PROTEIN"/>
    <property type="match status" value="1"/>
</dbReference>
<dbReference type="PANTHER" id="PTHR36512">
    <property type="entry name" value="D-AMINOPEPTIDASE"/>
    <property type="match status" value="1"/>
</dbReference>
<dbReference type="Pfam" id="PF03576">
    <property type="entry name" value="Peptidase_S58"/>
    <property type="match status" value="1"/>
</dbReference>
<dbReference type="SUPFAM" id="SSF56266">
    <property type="entry name" value="DmpA/ArgJ-like"/>
    <property type="match status" value="1"/>
</dbReference>
<proteinExistence type="inferred from homology"/>
<sequence>MLRFDFPGVSIGAAHYEEGPTGATVIHIPAGARTAVDARGGAVGLSGGYDFNHAICLAGGAGYGLEAGAGVSGALLERLEYRTGFAELQLVSSAVIYDFSARSTAVYPDKALGRAALEFAVPGEFPQGRAGAGMSASAGKVDWDRTEITGQGAAFRRLGDVRILAVVVPNPVGVIVDRAGTVVRGNYDAQTGVRRHPVFDYQEAFAEQVPPVTEAGNTTISAIVTNVRMSPVELNQFAKQVHSSMHRGIQPFHTDMDGDTLFAVTTDEIDLPTTPGSSRGRLSVNATALGAIASEVMWDAVLEAGK</sequence>
<comment type="miscellaneous">
    <text evidence="1">This gene may not be expressed. The 25 amino acid residues corresponding to the N-terminal region of NylC are replaced with 76 residues derived from non-coding regions. No potent initiation codons are found within the replaced region of nylC'.</text>
</comment>
<comment type="similarity">
    <text evidence="3">Belongs to the peptidase S58 family.</text>
</comment>
<reference key="1">
    <citation type="journal article" date="2007" name="J. Biosci. Bioeng.">
        <title>Genetic organization of nylon-oligomer-degrading enzymes from alkalophilic bacterium, Agromyces sp. KY5R.</title>
        <authorList>
            <person name="Yasuhira K."/>
            <person name="Uedo Y."/>
            <person name="Takeo M."/>
            <person name="Kato D."/>
            <person name="Negoro S."/>
        </authorList>
    </citation>
    <scope>NUCLEOTIDE SEQUENCE [GENOMIC DNA]</scope>
    <scope>DISCUSSION OF SEQUENCE</scope>
    <source>
        <strain>KY5R</strain>
    </source>
</reference>
<evidence type="ECO:0000269" key="1">
    <source>
    </source>
</evidence>
<evidence type="ECO:0000303" key="2">
    <source>
    </source>
</evidence>
<evidence type="ECO:0000305" key="3"/>
<organism>
    <name type="scientific">Agromyces sp. (strain KY5R)</name>
    <dbReference type="NCBI Taxonomy" id="388924"/>
    <lineage>
        <taxon>Bacteria</taxon>
        <taxon>Bacillati</taxon>
        <taxon>Actinomycetota</taxon>
        <taxon>Actinomycetes</taxon>
        <taxon>Micrococcales</taxon>
        <taxon>Microbacteriaceae</taxon>
        <taxon>Agromyces</taxon>
    </lineage>
</organism>